<accession>Q6D1I2</accession>
<feature type="chain" id="PRO_0000268895" description="Sigma factor-binding protein Crl">
    <location>
        <begin position="1"/>
        <end position="124"/>
    </location>
</feature>
<feature type="region of interest" description="Essential for activity" evidence="1">
    <location>
        <begin position="99"/>
        <end position="118"/>
    </location>
</feature>
<feature type="coiled-coil region" evidence="1">
    <location>
        <begin position="90"/>
        <end position="115"/>
    </location>
</feature>
<keyword id="KW-0010">Activator</keyword>
<keyword id="KW-0175">Coiled coil</keyword>
<keyword id="KW-0963">Cytoplasm</keyword>
<keyword id="KW-1185">Reference proteome</keyword>
<keyword id="KW-0804">Transcription</keyword>
<keyword id="KW-0805">Transcription regulation</keyword>
<organism>
    <name type="scientific">Pectobacterium atrosepticum (strain SCRI 1043 / ATCC BAA-672)</name>
    <name type="common">Erwinia carotovora subsp. atroseptica</name>
    <dbReference type="NCBI Taxonomy" id="218491"/>
    <lineage>
        <taxon>Bacteria</taxon>
        <taxon>Pseudomonadati</taxon>
        <taxon>Pseudomonadota</taxon>
        <taxon>Gammaproteobacteria</taxon>
        <taxon>Enterobacterales</taxon>
        <taxon>Pectobacteriaceae</taxon>
        <taxon>Pectobacterium</taxon>
    </lineage>
</organism>
<comment type="function">
    <text evidence="1">Binds to the sigma-S subunit of RNA polymerase, activating expression of sigma-S-regulated genes. Stimulates RNA polymerase holoenzyme formation and may bind to several other sigma factors, such as sigma-70 and sigma-32.</text>
</comment>
<comment type="subcellular location">
    <subcellularLocation>
        <location evidence="1">Cytoplasm</location>
    </subcellularLocation>
</comment>
<comment type="similarity">
    <text evidence="1">Belongs to the Crl family.</text>
</comment>
<evidence type="ECO:0000255" key="1">
    <source>
        <dbReference type="HAMAP-Rule" id="MF_01178"/>
    </source>
</evidence>
<protein>
    <recommendedName>
        <fullName evidence="1">Sigma factor-binding protein Crl</fullName>
    </recommendedName>
</protein>
<dbReference type="EMBL" id="BX950851">
    <property type="protein sequence ID" value="CAG76363.1"/>
    <property type="molecule type" value="Genomic_DNA"/>
</dbReference>
<dbReference type="RefSeq" id="WP_011094972.1">
    <property type="nucleotide sequence ID" value="NC_004547.2"/>
</dbReference>
<dbReference type="SMR" id="Q6D1I2"/>
<dbReference type="STRING" id="218491.ECA3464"/>
<dbReference type="GeneID" id="57210133"/>
<dbReference type="KEGG" id="eca:ECA3464"/>
<dbReference type="PATRIC" id="fig|218491.5.peg.3504"/>
<dbReference type="eggNOG" id="ENOG502ZQ8E">
    <property type="taxonomic scope" value="Bacteria"/>
</dbReference>
<dbReference type="HOGENOM" id="CLU_136773_0_0_6"/>
<dbReference type="OrthoDB" id="6428303at2"/>
<dbReference type="Proteomes" id="UP000007966">
    <property type="component" value="Chromosome"/>
</dbReference>
<dbReference type="GO" id="GO:0005737">
    <property type="term" value="C:cytoplasm"/>
    <property type="evidence" value="ECO:0007669"/>
    <property type="project" value="UniProtKB-SubCell"/>
</dbReference>
<dbReference type="GO" id="GO:0045893">
    <property type="term" value="P:positive regulation of DNA-templated transcription"/>
    <property type="evidence" value="ECO:0007669"/>
    <property type="project" value="UniProtKB-UniRule"/>
</dbReference>
<dbReference type="Gene3D" id="3.30.310.230">
    <property type="entry name" value="Sigma factor-binding protein Crl monomer"/>
    <property type="match status" value="1"/>
</dbReference>
<dbReference type="HAMAP" id="MF_01178">
    <property type="entry name" value="Crl"/>
    <property type="match status" value="1"/>
</dbReference>
<dbReference type="InterPro" id="IPR009986">
    <property type="entry name" value="Tscrpt_reg_Crl"/>
</dbReference>
<dbReference type="InterPro" id="IPR038208">
    <property type="entry name" value="Tscrpt_reg_Crl_sf"/>
</dbReference>
<dbReference type="NCBIfam" id="NF008217">
    <property type="entry name" value="PRK10984.1"/>
    <property type="match status" value="1"/>
</dbReference>
<dbReference type="Pfam" id="PF07417">
    <property type="entry name" value="Crl"/>
    <property type="match status" value="1"/>
</dbReference>
<reference key="1">
    <citation type="journal article" date="2004" name="Proc. Natl. Acad. Sci. U.S.A.">
        <title>Genome sequence of the enterobacterial phytopathogen Erwinia carotovora subsp. atroseptica and characterization of virulence factors.</title>
        <authorList>
            <person name="Bell K.S."/>
            <person name="Sebaihia M."/>
            <person name="Pritchard L."/>
            <person name="Holden M.T.G."/>
            <person name="Hyman L.J."/>
            <person name="Holeva M.C."/>
            <person name="Thomson N.R."/>
            <person name="Bentley S.D."/>
            <person name="Churcher L.J.C."/>
            <person name="Mungall K."/>
            <person name="Atkin R."/>
            <person name="Bason N."/>
            <person name="Brooks K."/>
            <person name="Chillingworth T."/>
            <person name="Clark K."/>
            <person name="Doggett J."/>
            <person name="Fraser A."/>
            <person name="Hance Z."/>
            <person name="Hauser H."/>
            <person name="Jagels K."/>
            <person name="Moule S."/>
            <person name="Norbertczak H."/>
            <person name="Ormond D."/>
            <person name="Price C."/>
            <person name="Quail M.A."/>
            <person name="Sanders M."/>
            <person name="Walker D."/>
            <person name="Whitehead S."/>
            <person name="Salmond G.P.C."/>
            <person name="Birch P.R.J."/>
            <person name="Parkhill J."/>
            <person name="Toth I.K."/>
        </authorList>
    </citation>
    <scope>NUCLEOTIDE SEQUENCE [LARGE SCALE GENOMIC DNA]</scope>
    <source>
        <strain>SCRI 1043 / ATCC BAA-672</strain>
    </source>
</reference>
<name>CRL_PECAS</name>
<sequence length="124" mass="14427">MMLPSGHPKSRLMKNFTALGPYIREAQCEDTAFFFDCLAVCVNIKPAPEEREFWGWWLNLEDTGKAFSYEYHYGLFDKQGNWREEKIKGKAVIEQVENAKQAFHVRLEKLLRSLEPACTLVARP</sequence>
<proteinExistence type="inferred from homology"/>
<gene>
    <name evidence="1" type="primary">crl</name>
    <name type="ordered locus">ECA3464</name>
</gene>